<accession>A5CR89</accession>
<proteinExistence type="inferred from homology"/>
<protein>
    <recommendedName>
        <fullName evidence="1">Leucine--tRNA ligase</fullName>
        <ecNumber evidence="1">6.1.1.4</ecNumber>
    </recommendedName>
    <alternativeName>
        <fullName evidence="1">Leucyl-tRNA synthetase</fullName>
        <shortName evidence="1">LeuRS</shortName>
    </alternativeName>
</protein>
<dbReference type="EC" id="6.1.1.4" evidence="1"/>
<dbReference type="EMBL" id="AM711867">
    <property type="protein sequence ID" value="CAN01594.1"/>
    <property type="molecule type" value="Genomic_DNA"/>
</dbReference>
<dbReference type="RefSeq" id="WP_012038234.1">
    <property type="nucleotide sequence ID" value="NC_009480.1"/>
</dbReference>
<dbReference type="SMR" id="A5CR89"/>
<dbReference type="KEGG" id="cmi:CMM_1547"/>
<dbReference type="eggNOG" id="COG0495">
    <property type="taxonomic scope" value="Bacteria"/>
</dbReference>
<dbReference type="HOGENOM" id="CLU_004427_0_0_11"/>
<dbReference type="OrthoDB" id="9810365at2"/>
<dbReference type="Proteomes" id="UP000001564">
    <property type="component" value="Chromosome"/>
</dbReference>
<dbReference type="GO" id="GO:0005829">
    <property type="term" value="C:cytosol"/>
    <property type="evidence" value="ECO:0007669"/>
    <property type="project" value="TreeGrafter"/>
</dbReference>
<dbReference type="GO" id="GO:0002161">
    <property type="term" value="F:aminoacyl-tRNA deacylase activity"/>
    <property type="evidence" value="ECO:0007669"/>
    <property type="project" value="InterPro"/>
</dbReference>
<dbReference type="GO" id="GO:0005524">
    <property type="term" value="F:ATP binding"/>
    <property type="evidence" value="ECO:0007669"/>
    <property type="project" value="UniProtKB-UniRule"/>
</dbReference>
<dbReference type="GO" id="GO:0004823">
    <property type="term" value="F:leucine-tRNA ligase activity"/>
    <property type="evidence" value="ECO:0007669"/>
    <property type="project" value="UniProtKB-UniRule"/>
</dbReference>
<dbReference type="GO" id="GO:0006429">
    <property type="term" value="P:leucyl-tRNA aminoacylation"/>
    <property type="evidence" value="ECO:0007669"/>
    <property type="project" value="UniProtKB-UniRule"/>
</dbReference>
<dbReference type="CDD" id="cd07958">
    <property type="entry name" value="Anticodon_Ia_Leu_BEm"/>
    <property type="match status" value="1"/>
</dbReference>
<dbReference type="CDD" id="cd00812">
    <property type="entry name" value="LeuRS_core"/>
    <property type="match status" value="1"/>
</dbReference>
<dbReference type="FunFam" id="1.10.730.10:FF:000002">
    <property type="entry name" value="Leucine--tRNA ligase"/>
    <property type="match status" value="1"/>
</dbReference>
<dbReference type="FunFam" id="3.40.50.620:FF:000003">
    <property type="entry name" value="Leucine--tRNA ligase"/>
    <property type="match status" value="1"/>
</dbReference>
<dbReference type="FunFam" id="3.40.50.620:FF:000056">
    <property type="entry name" value="Leucine--tRNA ligase"/>
    <property type="match status" value="1"/>
</dbReference>
<dbReference type="Gene3D" id="3.10.20.590">
    <property type="match status" value="1"/>
</dbReference>
<dbReference type="Gene3D" id="3.40.50.620">
    <property type="entry name" value="HUPs"/>
    <property type="match status" value="2"/>
</dbReference>
<dbReference type="Gene3D" id="1.10.730.10">
    <property type="entry name" value="Isoleucyl-tRNA Synthetase, Domain 1"/>
    <property type="match status" value="1"/>
</dbReference>
<dbReference type="Gene3D" id="3.90.740.10">
    <property type="entry name" value="Valyl/Leucyl/Isoleucyl-tRNA synthetase, editing domain"/>
    <property type="match status" value="1"/>
</dbReference>
<dbReference type="HAMAP" id="MF_00049_B">
    <property type="entry name" value="Leu_tRNA_synth_B"/>
    <property type="match status" value="1"/>
</dbReference>
<dbReference type="InterPro" id="IPR001412">
    <property type="entry name" value="aa-tRNA-synth_I_CS"/>
</dbReference>
<dbReference type="InterPro" id="IPR002300">
    <property type="entry name" value="aa-tRNA-synth_Ia"/>
</dbReference>
<dbReference type="InterPro" id="IPR002302">
    <property type="entry name" value="Leu-tRNA-ligase"/>
</dbReference>
<dbReference type="InterPro" id="IPR025709">
    <property type="entry name" value="Leu_tRNA-synth_edit"/>
</dbReference>
<dbReference type="InterPro" id="IPR013155">
    <property type="entry name" value="M/V/L/I-tRNA-synth_anticd-bd"/>
</dbReference>
<dbReference type="InterPro" id="IPR014729">
    <property type="entry name" value="Rossmann-like_a/b/a_fold"/>
</dbReference>
<dbReference type="InterPro" id="IPR009080">
    <property type="entry name" value="tRNAsynth_Ia_anticodon-bd"/>
</dbReference>
<dbReference type="InterPro" id="IPR009008">
    <property type="entry name" value="Val/Leu/Ile-tRNA-synth_edit"/>
</dbReference>
<dbReference type="NCBIfam" id="TIGR00396">
    <property type="entry name" value="leuS_bact"/>
    <property type="match status" value="1"/>
</dbReference>
<dbReference type="PANTHER" id="PTHR43740:SF2">
    <property type="entry name" value="LEUCINE--TRNA LIGASE, MITOCHONDRIAL"/>
    <property type="match status" value="1"/>
</dbReference>
<dbReference type="PANTHER" id="PTHR43740">
    <property type="entry name" value="LEUCYL-TRNA SYNTHETASE"/>
    <property type="match status" value="1"/>
</dbReference>
<dbReference type="Pfam" id="PF08264">
    <property type="entry name" value="Anticodon_1"/>
    <property type="match status" value="1"/>
</dbReference>
<dbReference type="Pfam" id="PF00133">
    <property type="entry name" value="tRNA-synt_1"/>
    <property type="match status" value="2"/>
</dbReference>
<dbReference type="Pfam" id="PF13603">
    <property type="entry name" value="tRNA-synt_1_2"/>
    <property type="match status" value="1"/>
</dbReference>
<dbReference type="PRINTS" id="PR00985">
    <property type="entry name" value="TRNASYNTHLEU"/>
</dbReference>
<dbReference type="SUPFAM" id="SSF47323">
    <property type="entry name" value="Anticodon-binding domain of a subclass of class I aminoacyl-tRNA synthetases"/>
    <property type="match status" value="1"/>
</dbReference>
<dbReference type="SUPFAM" id="SSF52374">
    <property type="entry name" value="Nucleotidylyl transferase"/>
    <property type="match status" value="1"/>
</dbReference>
<dbReference type="SUPFAM" id="SSF50677">
    <property type="entry name" value="ValRS/IleRS/LeuRS editing domain"/>
    <property type="match status" value="1"/>
</dbReference>
<dbReference type="PROSITE" id="PS00178">
    <property type="entry name" value="AA_TRNA_LIGASE_I"/>
    <property type="match status" value="1"/>
</dbReference>
<name>SYL_CLAM3</name>
<organism>
    <name type="scientific">Clavibacter michiganensis subsp. michiganensis (strain NCPPB 382)</name>
    <dbReference type="NCBI Taxonomy" id="443906"/>
    <lineage>
        <taxon>Bacteria</taxon>
        <taxon>Bacillati</taxon>
        <taxon>Actinomycetota</taxon>
        <taxon>Actinomycetes</taxon>
        <taxon>Micrococcales</taxon>
        <taxon>Microbacteriaceae</taxon>
        <taxon>Clavibacter</taxon>
    </lineage>
</organism>
<reference key="1">
    <citation type="journal article" date="2008" name="J. Bacteriol.">
        <title>The genome sequence of the tomato-pathogenic actinomycete Clavibacter michiganensis subsp. michiganensis NCPPB382 reveals a large island involved in pathogenicity.</title>
        <authorList>
            <person name="Gartemann K.-H."/>
            <person name="Abt B."/>
            <person name="Bekel T."/>
            <person name="Burger A."/>
            <person name="Engemann J."/>
            <person name="Fluegel M."/>
            <person name="Gaigalat L."/>
            <person name="Goesmann A."/>
            <person name="Graefen I."/>
            <person name="Kalinowski J."/>
            <person name="Kaup O."/>
            <person name="Kirchner O."/>
            <person name="Krause L."/>
            <person name="Linke B."/>
            <person name="McHardy A."/>
            <person name="Meyer F."/>
            <person name="Pohle S."/>
            <person name="Rueckert C."/>
            <person name="Schneiker S."/>
            <person name="Zellermann E.-M."/>
            <person name="Puehler A."/>
            <person name="Eichenlaub R."/>
            <person name="Kaiser O."/>
            <person name="Bartels D."/>
        </authorList>
    </citation>
    <scope>NUCLEOTIDE SEQUENCE [LARGE SCALE GENOMIC DNA]</scope>
    <source>
        <strain>NCPPB 382</strain>
    </source>
</reference>
<keyword id="KW-0030">Aminoacyl-tRNA synthetase</keyword>
<keyword id="KW-0067">ATP-binding</keyword>
<keyword id="KW-0963">Cytoplasm</keyword>
<keyword id="KW-0436">Ligase</keyword>
<keyword id="KW-0547">Nucleotide-binding</keyword>
<keyword id="KW-0648">Protein biosynthesis</keyword>
<sequence length="851" mass="94950">MAHETPDTPGETYDFRAIEAEWSEVWEREQPFRTPDASDSRPRKYILDMFPYPSGDLHMGHAEAFALGDAVARYWRQQGFNVLHPIGWDSFGLPAENAAIKRGVDPREWTYANIETQKQSMKRYGLSFDWERELHTSDPEYYRWNQWLFLKMHEKGLAYRKDSWVNWDPVDQTVLANEQVLPDGTSDRSGAVVVKKKLTQWYLRITDYADRLVDDLNQLEGTWPAKVISMQRNWIGRSIGAEVDFVVEGRDEPVTVFTTRPDTLHGATFMVVAPDSDLAAELVEGASDEVRERFRGYLERTQRLNEIERSTTDRPKTGIPLGRTAINPVNGERIPVWAADYLLADYGTGAVMAVPAHDQRDLDFARAFDLPVRVVVDTTQPVTGAIRIIPEDGELPDLEEVLPGRTGVALPGEGRLINSGSLNGLSKQPAIKRVIEQLEAEGRGRAAKNYRLRDWLISRQRFWGTPIPIVYDAEGNEIRVPEDQLPVRLPDTEGLDLAPKGKSPLAAATEWTNVPSPVDGSPATRDPDTMDTFMDSSWYWLRFLSPNDATKAFDPADADRWAPIDQYVGGVEHAILHLLYSRFITKVLFDLGYVTFTEPFSALLNQGMVLSGGSKMSKSKGGVDLGSEMDRHGVDAIRLTMAFAGPPEDDIDWEDVSPSGSAKFLARAWRLTGDITSAPEIEWKTGDEALRRVTHRFLAEAPGMLEAFKFNVVIARTMELVNAIRKTIDQGPGGGDAAVREATEVVAIALSLFAPYTAEDMWRRLGREGSVAFAGWRKAERNLLVQSTVTAVVQVDGKVRDKLEVDAKIGADELEALARETAGVKRSTAGRTIDKVIVRAPKIVSITTTAP</sequence>
<gene>
    <name evidence="1" type="primary">leuS</name>
    <name type="ordered locus">CMM_1547</name>
</gene>
<comment type="catalytic activity">
    <reaction evidence="1">
        <text>tRNA(Leu) + L-leucine + ATP = L-leucyl-tRNA(Leu) + AMP + diphosphate</text>
        <dbReference type="Rhea" id="RHEA:11688"/>
        <dbReference type="Rhea" id="RHEA-COMP:9613"/>
        <dbReference type="Rhea" id="RHEA-COMP:9622"/>
        <dbReference type="ChEBI" id="CHEBI:30616"/>
        <dbReference type="ChEBI" id="CHEBI:33019"/>
        <dbReference type="ChEBI" id="CHEBI:57427"/>
        <dbReference type="ChEBI" id="CHEBI:78442"/>
        <dbReference type="ChEBI" id="CHEBI:78494"/>
        <dbReference type="ChEBI" id="CHEBI:456215"/>
        <dbReference type="EC" id="6.1.1.4"/>
    </reaction>
</comment>
<comment type="subcellular location">
    <subcellularLocation>
        <location evidence="1">Cytoplasm</location>
    </subcellularLocation>
</comment>
<comment type="similarity">
    <text evidence="1">Belongs to the class-I aminoacyl-tRNA synthetase family.</text>
</comment>
<evidence type="ECO:0000255" key="1">
    <source>
        <dbReference type="HAMAP-Rule" id="MF_00049"/>
    </source>
</evidence>
<feature type="chain" id="PRO_0000334743" description="Leucine--tRNA ligase">
    <location>
        <begin position="1"/>
        <end position="851"/>
    </location>
</feature>
<feature type="short sequence motif" description="'HIGH' region">
    <location>
        <begin position="51"/>
        <end position="61"/>
    </location>
</feature>
<feature type="short sequence motif" description="'KMSKS' region">
    <location>
        <begin position="615"/>
        <end position="619"/>
    </location>
</feature>
<feature type="binding site" evidence="1">
    <location>
        <position position="618"/>
    </location>
    <ligand>
        <name>ATP</name>
        <dbReference type="ChEBI" id="CHEBI:30616"/>
    </ligand>
</feature>